<name>TRPG_ARCFU</name>
<protein>
    <recommendedName>
        <fullName>Anthranilate synthase component 2</fullName>
        <shortName>AS</shortName>
        <shortName>ASII</shortName>
        <ecNumber>4.1.3.27</ecNumber>
    </recommendedName>
    <alternativeName>
        <fullName>Anthranilate synthase, GATase component</fullName>
    </alternativeName>
    <alternativeName>
        <fullName>Anthranilate synthase, glutamine amidotransferase component</fullName>
    </alternativeName>
</protein>
<sequence length="178" mass="19593">MIVVVDCKDSFVYNLVEYISLFDKVRVVEKESAGLLRKMSFDGVVISPGPGKPDRSLEFVFKMGVPVLGVCLGHQMIAEVFGGKVGRVEPVHGKTSLVEHDGRGIFKGVRNPLRAGRYHSLAVLEPPEGFEVCAKSEDGVVMGLRRGKIHGVQFHPESVLTEDGVRMIRNFVEMCHDG</sequence>
<gene>
    <name type="primary">trpG</name>
    <name type="ordered locus">AF_1602</name>
</gene>
<keyword id="KW-0028">Amino-acid biosynthesis</keyword>
<keyword id="KW-0057">Aromatic amino acid biosynthesis</keyword>
<keyword id="KW-0315">Glutamine amidotransferase</keyword>
<keyword id="KW-0456">Lyase</keyword>
<keyword id="KW-1185">Reference proteome</keyword>
<keyword id="KW-0822">Tryptophan biosynthesis</keyword>
<comment type="function">
    <text evidence="1">Part of a heterotetrameric complex that catalyzes the two-step biosynthesis of anthranilate, an intermediate in the biosynthesis of L-tryptophan. In the first step, the glutamine-binding beta subunit (TrpG) of anthranilate synthase (AS) provides the glutamine amidotransferase activity which generates ammonia as a substrate that, along with chorismate, is used in the second step, catalyzed by the large alpha subunit of AS (TrpE) to produce anthranilate. In the absence of TrpG, TrpE can synthesize anthranilate directly from chorismate and high concentrations of ammonia (By similarity).</text>
</comment>
<comment type="catalytic activity">
    <reaction>
        <text>chorismate + L-glutamine = anthranilate + pyruvate + L-glutamate + H(+)</text>
        <dbReference type="Rhea" id="RHEA:21732"/>
        <dbReference type="ChEBI" id="CHEBI:15361"/>
        <dbReference type="ChEBI" id="CHEBI:15378"/>
        <dbReference type="ChEBI" id="CHEBI:16567"/>
        <dbReference type="ChEBI" id="CHEBI:29748"/>
        <dbReference type="ChEBI" id="CHEBI:29985"/>
        <dbReference type="ChEBI" id="CHEBI:58359"/>
        <dbReference type="EC" id="4.1.3.27"/>
    </reaction>
</comment>
<comment type="pathway">
    <text>Amino-acid biosynthesis; L-tryptophan biosynthesis; L-tryptophan from chorismate: step 1/5.</text>
</comment>
<comment type="subunit">
    <text evidence="1">Heterotetramer consisting of two non-identical subunits: a beta subunit (TrpG) and a large alpha subunit (TrpE).</text>
</comment>
<evidence type="ECO:0000250" key="1"/>
<evidence type="ECO:0000250" key="2">
    <source>
        <dbReference type="UniProtKB" id="P00900"/>
    </source>
</evidence>
<evidence type="ECO:0000255" key="3">
    <source>
        <dbReference type="PROSITE-ProRule" id="PRU00605"/>
    </source>
</evidence>
<reference key="1">
    <citation type="journal article" date="1997" name="Nature">
        <title>The complete genome sequence of the hyperthermophilic, sulphate-reducing archaeon Archaeoglobus fulgidus.</title>
        <authorList>
            <person name="Klenk H.-P."/>
            <person name="Clayton R.A."/>
            <person name="Tomb J.-F."/>
            <person name="White O."/>
            <person name="Nelson K.E."/>
            <person name="Ketchum K.A."/>
            <person name="Dodson R.J."/>
            <person name="Gwinn M.L."/>
            <person name="Hickey E.K."/>
            <person name="Peterson J.D."/>
            <person name="Richardson D.L."/>
            <person name="Kerlavage A.R."/>
            <person name="Graham D.E."/>
            <person name="Kyrpides N.C."/>
            <person name="Fleischmann R.D."/>
            <person name="Quackenbush J."/>
            <person name="Lee N.H."/>
            <person name="Sutton G.G."/>
            <person name="Gill S.R."/>
            <person name="Kirkness E.F."/>
            <person name="Dougherty B.A."/>
            <person name="McKenney K."/>
            <person name="Adams M.D."/>
            <person name="Loftus B.J."/>
            <person name="Peterson S.N."/>
            <person name="Reich C.I."/>
            <person name="McNeil L.K."/>
            <person name="Badger J.H."/>
            <person name="Glodek A."/>
            <person name="Zhou L."/>
            <person name="Overbeek R."/>
            <person name="Gocayne J.D."/>
            <person name="Weidman J.F."/>
            <person name="McDonald L.A."/>
            <person name="Utterback T.R."/>
            <person name="Cotton M.D."/>
            <person name="Spriggs T."/>
            <person name="Artiach P."/>
            <person name="Kaine B.P."/>
            <person name="Sykes S.M."/>
            <person name="Sadow P.W."/>
            <person name="D'Andrea K.P."/>
            <person name="Bowman C."/>
            <person name="Fujii C."/>
            <person name="Garland S.A."/>
            <person name="Mason T.M."/>
            <person name="Olsen G.J."/>
            <person name="Fraser C.M."/>
            <person name="Smith H.O."/>
            <person name="Woese C.R."/>
            <person name="Venter J.C."/>
        </authorList>
    </citation>
    <scope>NUCLEOTIDE SEQUENCE [LARGE SCALE GENOMIC DNA]</scope>
    <source>
        <strain>ATCC 49558 / DSM 4304 / JCM 9628 / NBRC 100126 / VC-16</strain>
    </source>
</reference>
<dbReference type="EC" id="4.1.3.27"/>
<dbReference type="EMBL" id="AE000782">
    <property type="protein sequence ID" value="AAB89647.1"/>
    <property type="molecule type" value="Genomic_DNA"/>
</dbReference>
<dbReference type="PIR" id="A69450">
    <property type="entry name" value="A69450"/>
</dbReference>
<dbReference type="RefSeq" id="WP_010879099.1">
    <property type="nucleotide sequence ID" value="NC_000917.1"/>
</dbReference>
<dbReference type="SMR" id="O28670"/>
<dbReference type="STRING" id="224325.AF_1602"/>
<dbReference type="MEROPS" id="C26.955"/>
<dbReference type="PaxDb" id="224325-AF_1602"/>
<dbReference type="EnsemblBacteria" id="AAB89647">
    <property type="protein sequence ID" value="AAB89647"/>
    <property type="gene ID" value="AF_1602"/>
</dbReference>
<dbReference type="GeneID" id="1484828"/>
<dbReference type="KEGG" id="afu:AF_1602"/>
<dbReference type="eggNOG" id="arCOG00086">
    <property type="taxonomic scope" value="Archaea"/>
</dbReference>
<dbReference type="HOGENOM" id="CLU_014340_1_2_2"/>
<dbReference type="OrthoDB" id="3321at2157"/>
<dbReference type="PhylomeDB" id="O28670"/>
<dbReference type="UniPathway" id="UPA00035">
    <property type="reaction ID" value="UER00040"/>
</dbReference>
<dbReference type="Proteomes" id="UP000002199">
    <property type="component" value="Chromosome"/>
</dbReference>
<dbReference type="GO" id="GO:0005829">
    <property type="term" value="C:cytosol"/>
    <property type="evidence" value="ECO:0007669"/>
    <property type="project" value="TreeGrafter"/>
</dbReference>
<dbReference type="GO" id="GO:0004049">
    <property type="term" value="F:anthranilate synthase activity"/>
    <property type="evidence" value="ECO:0007669"/>
    <property type="project" value="UniProtKB-EC"/>
</dbReference>
<dbReference type="GO" id="GO:0000162">
    <property type="term" value="P:L-tryptophan biosynthetic process"/>
    <property type="evidence" value="ECO:0007669"/>
    <property type="project" value="UniProtKB-UniPathway"/>
</dbReference>
<dbReference type="CDD" id="cd01743">
    <property type="entry name" value="GATase1_Anthranilate_Synthase"/>
    <property type="match status" value="1"/>
</dbReference>
<dbReference type="Gene3D" id="3.40.50.880">
    <property type="match status" value="1"/>
</dbReference>
<dbReference type="InterPro" id="IPR050472">
    <property type="entry name" value="Anth_synth/Amidotransfase"/>
</dbReference>
<dbReference type="InterPro" id="IPR029062">
    <property type="entry name" value="Class_I_gatase-like"/>
</dbReference>
<dbReference type="InterPro" id="IPR017926">
    <property type="entry name" value="GATASE"/>
</dbReference>
<dbReference type="InterPro" id="IPR006221">
    <property type="entry name" value="TrpG/PapA_dom"/>
</dbReference>
<dbReference type="NCBIfam" id="TIGR00566">
    <property type="entry name" value="trpG_papA"/>
    <property type="match status" value="1"/>
</dbReference>
<dbReference type="PANTHER" id="PTHR43418:SF4">
    <property type="entry name" value="MULTIFUNCTIONAL TRYPTOPHAN BIOSYNTHESIS PROTEIN"/>
    <property type="match status" value="1"/>
</dbReference>
<dbReference type="PANTHER" id="PTHR43418">
    <property type="entry name" value="MULTIFUNCTIONAL TRYPTOPHAN BIOSYNTHESIS PROTEIN-RELATED"/>
    <property type="match status" value="1"/>
</dbReference>
<dbReference type="Pfam" id="PF00117">
    <property type="entry name" value="GATase"/>
    <property type="match status" value="1"/>
</dbReference>
<dbReference type="PRINTS" id="PR00097">
    <property type="entry name" value="ANTSNTHASEII"/>
</dbReference>
<dbReference type="PRINTS" id="PR00096">
    <property type="entry name" value="GATASE"/>
</dbReference>
<dbReference type="SUPFAM" id="SSF52317">
    <property type="entry name" value="Class I glutamine amidotransferase-like"/>
    <property type="match status" value="1"/>
</dbReference>
<dbReference type="PROSITE" id="PS51273">
    <property type="entry name" value="GATASE_TYPE_1"/>
    <property type="match status" value="1"/>
</dbReference>
<organism>
    <name type="scientific">Archaeoglobus fulgidus (strain ATCC 49558 / DSM 4304 / JCM 9628 / NBRC 100126 / VC-16)</name>
    <dbReference type="NCBI Taxonomy" id="224325"/>
    <lineage>
        <taxon>Archaea</taxon>
        <taxon>Methanobacteriati</taxon>
        <taxon>Methanobacteriota</taxon>
        <taxon>Archaeoglobi</taxon>
        <taxon>Archaeoglobales</taxon>
        <taxon>Archaeoglobaceae</taxon>
        <taxon>Archaeoglobus</taxon>
    </lineage>
</organism>
<accession>O28670</accession>
<feature type="chain" id="PRO_0000056870" description="Anthranilate synthase component 2">
    <location>
        <begin position="1"/>
        <end position="178"/>
    </location>
</feature>
<feature type="domain" description="Glutamine amidotransferase type-1" evidence="3">
    <location>
        <begin position="1"/>
        <end position="178"/>
    </location>
</feature>
<feature type="active site" description="Nucleophile; for GATase activity" evidence="3">
    <location>
        <position position="71"/>
    </location>
</feature>
<feature type="active site" description="For GATase activity" evidence="3">
    <location>
        <position position="155"/>
    </location>
</feature>
<feature type="active site" description="For GATase activity" evidence="3">
    <location>
        <position position="157"/>
    </location>
</feature>
<feature type="binding site" evidence="2">
    <location>
        <begin position="49"/>
        <end position="51"/>
    </location>
    <ligand>
        <name>L-glutamine</name>
        <dbReference type="ChEBI" id="CHEBI:58359"/>
    </ligand>
</feature>
<feature type="binding site" evidence="2">
    <location>
        <position position="75"/>
    </location>
    <ligand>
        <name>L-glutamine</name>
        <dbReference type="ChEBI" id="CHEBI:58359"/>
    </ligand>
</feature>
<feature type="binding site" evidence="2">
    <location>
        <begin position="120"/>
        <end position="121"/>
    </location>
    <ligand>
        <name>L-glutamine</name>
        <dbReference type="ChEBI" id="CHEBI:58359"/>
    </ligand>
</feature>
<proteinExistence type="inferred from homology"/>